<dbReference type="EMBL" id="AJ888457">
    <property type="protein sequence ID" value="CAI59896.1"/>
    <property type="molecule type" value="Genomic_DNA"/>
</dbReference>
<dbReference type="RefSeq" id="YP_319872.1">
    <property type="nucleotide sequence ID" value="NC_007409.1"/>
</dbReference>
<dbReference type="SMR" id="Q3V4R8"/>
<dbReference type="GeneID" id="4484252"/>
<dbReference type="KEGG" id="vg:4484252"/>
<dbReference type="Proteomes" id="UP000002150">
    <property type="component" value="Genome"/>
</dbReference>
<reference key="1">
    <citation type="journal article" date="2005" name="Nature">
        <title>Virology: independent virus development outside a host.</title>
        <authorList>
            <person name="Haring M."/>
            <person name="Vestergaard G."/>
            <person name="Rachel R."/>
            <person name="Chen L."/>
            <person name="Garrett R.A."/>
            <person name="Prangishvili D."/>
        </authorList>
    </citation>
    <scope>NUCLEOTIDE SEQUENCE [GENOMIC DNA]</scope>
</reference>
<accession>Q3V4R8</accession>
<sequence>MSARQPQNNNQQNNNSILQALQQVQQQNRPIVANIARIDPYMANMAYKMYNEIDVSINESVSTIDITNKMLRIAKGMIRSIEQGHAKMSATPFTLKESFKSLVMELLDVAYTDINTFMTQKYLELQENLTNNDLKKIHELNKTVMEYGLIYINAIHFVLLDTQGFLNEKLPTQLISPVDSARLLGHFHLKHKT</sequence>
<organismHost>
    <name type="scientific">Acidianus convivator</name>
    <dbReference type="NCBI Taxonomy" id="269667"/>
</organismHost>
<proteinExistence type="predicted"/>
<feature type="chain" id="PRO_0000389085" description="Uncharacterized protein ORF193">
    <location>
        <begin position="1"/>
        <end position="193"/>
    </location>
</feature>
<organism>
    <name type="scientific">Acidianus two-tailed virus</name>
    <name type="common">ATV</name>
    <dbReference type="NCBI Taxonomy" id="315953"/>
    <lineage>
        <taxon>Viruses</taxon>
        <taxon>Viruses incertae sedis</taxon>
        <taxon>Bicaudaviridae</taxon>
        <taxon>Bicaudavirus</taxon>
    </lineage>
</organism>
<keyword id="KW-1185">Reference proteome</keyword>
<name>Y193_ATV</name>
<protein>
    <recommendedName>
        <fullName>Uncharacterized protein ORF193</fullName>
    </recommendedName>
</protein>